<proteinExistence type="evidence at transcript level"/>
<name>HSP90_EIMTE</name>
<comment type="function">
    <text evidence="1">Molecular chaperone that promotes the maturation, structural maintenance and proper regulation of specific target proteins involved for instance in cell cycle control and signal transduction. Undergoes a functional cycle that is linked to its ATPase activity. This cycle probably induces conformational changes in the client proteins, thereby causing their activation. Interacts dynamically with various co-chaperones that modulate its substrate recognition, ATPase cycle and chaperone function (By similarity).</text>
</comment>
<comment type="subunit">
    <text evidence="1">Homodimer.</text>
</comment>
<comment type="subcellular location">
    <subcellularLocation>
        <location evidence="1">Cytoplasm</location>
    </subcellularLocation>
</comment>
<comment type="domain">
    <text evidence="1">The TPR repeat-binding motif mediates interaction with TPR repeat-containing proteins.</text>
</comment>
<comment type="similarity">
    <text evidence="3">Belongs to the heat shock protein 90 family.</text>
</comment>
<keyword id="KW-0067">ATP-binding</keyword>
<keyword id="KW-0143">Chaperone</keyword>
<keyword id="KW-0963">Cytoplasm</keyword>
<keyword id="KW-0547">Nucleotide-binding</keyword>
<keyword id="KW-0346">Stress response</keyword>
<gene>
    <name type="primary">HSP90</name>
</gene>
<reference key="1">
    <citation type="submission" date="1998-01" db="EMBL/GenBank/DDBJ databases">
        <authorList>
            <person name="Ouarzane M."/>
            <person name="Labbe M."/>
            <person name="Bourdieu C."/>
            <person name="Pery P."/>
        </authorList>
    </citation>
    <scope>NUCLEOTIDE SEQUENCE [MRNA]</scope>
    <source>
        <strain>PAPt38</strain>
    </source>
</reference>
<evidence type="ECO:0000250" key="1"/>
<evidence type="ECO:0000256" key="2">
    <source>
        <dbReference type="SAM" id="MobiDB-lite"/>
    </source>
</evidence>
<evidence type="ECO:0000305" key="3"/>
<dbReference type="EMBL" id="AF042329">
    <property type="protein sequence ID" value="AAB97088.1"/>
    <property type="molecule type" value="mRNA"/>
</dbReference>
<dbReference type="SMR" id="O44001"/>
<dbReference type="VEuPathDB" id="ToxoDB:ETH2_0701200"/>
<dbReference type="VEuPathDB" id="ToxoDB:ETH_00007385"/>
<dbReference type="GO" id="GO:0005737">
    <property type="term" value="C:cytoplasm"/>
    <property type="evidence" value="ECO:0007669"/>
    <property type="project" value="UniProtKB-SubCell"/>
</dbReference>
<dbReference type="GO" id="GO:0005524">
    <property type="term" value="F:ATP binding"/>
    <property type="evidence" value="ECO:0007669"/>
    <property type="project" value="UniProtKB-KW"/>
</dbReference>
<dbReference type="GO" id="GO:0016887">
    <property type="term" value="F:ATP hydrolysis activity"/>
    <property type="evidence" value="ECO:0007669"/>
    <property type="project" value="InterPro"/>
</dbReference>
<dbReference type="GO" id="GO:0140662">
    <property type="term" value="F:ATP-dependent protein folding chaperone"/>
    <property type="evidence" value="ECO:0007669"/>
    <property type="project" value="InterPro"/>
</dbReference>
<dbReference type="GO" id="GO:0051082">
    <property type="term" value="F:unfolded protein binding"/>
    <property type="evidence" value="ECO:0007669"/>
    <property type="project" value="InterPro"/>
</dbReference>
<dbReference type="CDD" id="cd16927">
    <property type="entry name" value="HATPase_Hsp90-like"/>
    <property type="match status" value="1"/>
</dbReference>
<dbReference type="FunFam" id="1.20.120.790:FF:000001">
    <property type="entry name" value="Heat shock protein 90 alpha"/>
    <property type="match status" value="1"/>
</dbReference>
<dbReference type="FunFam" id="3.30.230.80:FF:000001">
    <property type="entry name" value="Heat shock protein 90 alpha"/>
    <property type="match status" value="1"/>
</dbReference>
<dbReference type="FunFam" id="3.40.50.11260:FF:000001">
    <property type="entry name" value="Heat shock protein 90 alpha"/>
    <property type="match status" value="1"/>
</dbReference>
<dbReference type="FunFam" id="3.30.565.10:FF:000001">
    <property type="entry name" value="Heat shock protein HSP 90-alpha"/>
    <property type="match status" value="1"/>
</dbReference>
<dbReference type="Gene3D" id="3.30.230.80">
    <property type="match status" value="1"/>
</dbReference>
<dbReference type="Gene3D" id="3.40.50.11260">
    <property type="match status" value="1"/>
</dbReference>
<dbReference type="Gene3D" id="1.20.120.790">
    <property type="entry name" value="Heat shock protein 90, C-terminal domain"/>
    <property type="match status" value="1"/>
</dbReference>
<dbReference type="Gene3D" id="3.30.565.10">
    <property type="entry name" value="Histidine kinase-like ATPase, C-terminal domain"/>
    <property type="match status" value="1"/>
</dbReference>
<dbReference type="HAMAP" id="MF_00505">
    <property type="entry name" value="HSP90"/>
    <property type="match status" value="1"/>
</dbReference>
<dbReference type="InterPro" id="IPR036890">
    <property type="entry name" value="HATPase_C_sf"/>
</dbReference>
<dbReference type="InterPro" id="IPR019805">
    <property type="entry name" value="Heat_shock_protein_90_CS"/>
</dbReference>
<dbReference type="InterPro" id="IPR037196">
    <property type="entry name" value="HSP90_C"/>
</dbReference>
<dbReference type="InterPro" id="IPR001404">
    <property type="entry name" value="Hsp90_fam"/>
</dbReference>
<dbReference type="InterPro" id="IPR020575">
    <property type="entry name" value="Hsp90_N"/>
</dbReference>
<dbReference type="InterPro" id="IPR020568">
    <property type="entry name" value="Ribosomal_Su5_D2-typ_SF"/>
</dbReference>
<dbReference type="NCBIfam" id="NF003555">
    <property type="entry name" value="PRK05218.1"/>
    <property type="match status" value="1"/>
</dbReference>
<dbReference type="PANTHER" id="PTHR11528">
    <property type="entry name" value="HEAT SHOCK PROTEIN 90 FAMILY MEMBER"/>
    <property type="match status" value="1"/>
</dbReference>
<dbReference type="Pfam" id="PF02518">
    <property type="entry name" value="HATPase_c"/>
    <property type="match status" value="1"/>
</dbReference>
<dbReference type="Pfam" id="PF00183">
    <property type="entry name" value="HSP90"/>
    <property type="match status" value="1"/>
</dbReference>
<dbReference type="PIRSF" id="PIRSF002583">
    <property type="entry name" value="Hsp90"/>
    <property type="match status" value="1"/>
</dbReference>
<dbReference type="PRINTS" id="PR00775">
    <property type="entry name" value="HEATSHOCK90"/>
</dbReference>
<dbReference type="SMART" id="SM00387">
    <property type="entry name" value="HATPase_c"/>
    <property type="match status" value="1"/>
</dbReference>
<dbReference type="SUPFAM" id="SSF55874">
    <property type="entry name" value="ATPase domain of HSP90 chaperone/DNA topoisomerase II/histidine kinase"/>
    <property type="match status" value="1"/>
</dbReference>
<dbReference type="SUPFAM" id="SSF110942">
    <property type="entry name" value="HSP90 C-terminal domain"/>
    <property type="match status" value="1"/>
</dbReference>
<dbReference type="SUPFAM" id="SSF54211">
    <property type="entry name" value="Ribosomal protein S5 domain 2-like"/>
    <property type="match status" value="1"/>
</dbReference>
<dbReference type="PROSITE" id="PS00298">
    <property type="entry name" value="HSP90"/>
    <property type="match status" value="1"/>
</dbReference>
<accession>O44001</accession>
<sequence>MENKETFAFNADIQQLMSLIINTFYSNKEIFLRELISNASDALDKIRYEAITEPEKLKTKPELFIRLIPDKANNTLTIENSGIGMTKADLVNNLGTIARSGTKAFMEALQAGGDISMIGQFGVGFYSAYLVADSVTVVSKHNDDEQYVWESAAGGSFTVQKDDKYEPLGRGTRIILHLKEDQGEYLEERRLKDLVKKHSEFISFPIELAVEKTHEREVTESEDEEEKKADEKAEEKEGEEKKEGEEKKEGEEEKKEKTGKTKKVQEVTREWEQLNKQKPLWMRKPEEVTEEEYASFYKSLSNDWEEHLAVKHFSVEGQLEFKALLFVPKRAPFDLFETRKKRNNIKLYVRRVFIMDDCEDIIPEWLNFVKGVVDSEDLPLNISRESLQQNKILKVIRKNLVKKCLEMFAEIEEKKENYAKFYEQFSKNLKLGIHEDSANRAKIAELLRFHSSKSGEDMVSFKEYVDRMKEGQKDIYYITGESRQTVANSPFLEKLTKKGYEVLYMTDPIDEYAVQQLKEFDNHKLRCCTKEGLEIDESEEEKKKFEELKAEFEPLLKLIKEVLHDKVDKVVLSNRITDSPCVLVTTEFGWSANMERIMKAQALRDNSMTSYMVSKKTMEVNGHHSIMIEIKNKAAVDKSDKTVKDLIWLLYDTALLTSGFSLEEPTQFAARIHRMIKLGLSIDDDEEAKDDDLPPLEEVEGAADEASKMEEVD</sequence>
<protein>
    <recommendedName>
        <fullName>Heat shock protein 90</fullName>
    </recommendedName>
</protein>
<organism>
    <name type="scientific">Eimeria tenella</name>
    <name type="common">Coccidian parasite</name>
    <dbReference type="NCBI Taxonomy" id="5802"/>
    <lineage>
        <taxon>Eukaryota</taxon>
        <taxon>Sar</taxon>
        <taxon>Alveolata</taxon>
        <taxon>Apicomplexa</taxon>
        <taxon>Conoidasida</taxon>
        <taxon>Coccidia</taxon>
        <taxon>Eucoccidiorida</taxon>
        <taxon>Eimeriorina</taxon>
        <taxon>Eimeriidae</taxon>
        <taxon>Eimeria</taxon>
    </lineage>
</organism>
<feature type="chain" id="PRO_0000062938" description="Heat shock protein 90">
    <location>
        <begin position="1"/>
        <end position="713"/>
    </location>
</feature>
<feature type="region of interest" description="Disordered" evidence="2">
    <location>
        <begin position="212"/>
        <end position="264"/>
    </location>
</feature>
<feature type="region of interest" description="Disordered" evidence="2">
    <location>
        <begin position="685"/>
        <end position="713"/>
    </location>
</feature>
<feature type="short sequence motif" description="TPR repeat-binding">
    <location>
        <begin position="709"/>
        <end position="713"/>
    </location>
</feature>
<feature type="compositionally biased region" description="Basic and acidic residues" evidence="2">
    <location>
        <begin position="226"/>
        <end position="264"/>
    </location>
</feature>
<feature type="compositionally biased region" description="Acidic residues" evidence="2">
    <location>
        <begin position="685"/>
        <end position="703"/>
    </location>
</feature>
<feature type="binding site" evidence="1">
    <location>
        <position position="38"/>
    </location>
    <ligand>
        <name>ATP</name>
        <dbReference type="ChEBI" id="CHEBI:30616"/>
    </ligand>
</feature>
<feature type="binding site" evidence="1">
    <location>
        <position position="125"/>
    </location>
    <ligand>
        <name>ATP</name>
        <dbReference type="ChEBI" id="CHEBI:30616"/>
    </ligand>
</feature>
<feature type="binding site" evidence="1">
    <location>
        <position position="384"/>
    </location>
    <ligand>
        <name>ATP</name>
        <dbReference type="ChEBI" id="CHEBI:30616"/>
    </ligand>
</feature>